<comment type="function">
    <text evidence="1">NDH shuttles electrons from NAD(P)H:plastoquinone, via FMN and iron-sulfur (Fe-S) centers, to quinones in the photosynthetic chain and possibly in a chloroplast respiratory chain. The immediate electron acceptor for the enzyme in this species is believed to be plastoquinone. Couples the redox reaction to proton translocation, and thus conserves the redox energy in a proton gradient.</text>
</comment>
<comment type="catalytic activity">
    <reaction evidence="1">
        <text>a plastoquinone + NADH + (n+1) H(+)(in) = a plastoquinol + NAD(+) + n H(+)(out)</text>
        <dbReference type="Rhea" id="RHEA:42608"/>
        <dbReference type="Rhea" id="RHEA-COMP:9561"/>
        <dbReference type="Rhea" id="RHEA-COMP:9562"/>
        <dbReference type="ChEBI" id="CHEBI:15378"/>
        <dbReference type="ChEBI" id="CHEBI:17757"/>
        <dbReference type="ChEBI" id="CHEBI:57540"/>
        <dbReference type="ChEBI" id="CHEBI:57945"/>
        <dbReference type="ChEBI" id="CHEBI:62192"/>
    </reaction>
</comment>
<comment type="catalytic activity">
    <reaction evidence="1">
        <text>a plastoquinone + NADPH + (n+1) H(+)(in) = a plastoquinol + NADP(+) + n H(+)(out)</text>
        <dbReference type="Rhea" id="RHEA:42612"/>
        <dbReference type="Rhea" id="RHEA-COMP:9561"/>
        <dbReference type="Rhea" id="RHEA-COMP:9562"/>
        <dbReference type="ChEBI" id="CHEBI:15378"/>
        <dbReference type="ChEBI" id="CHEBI:17757"/>
        <dbReference type="ChEBI" id="CHEBI:57783"/>
        <dbReference type="ChEBI" id="CHEBI:58349"/>
        <dbReference type="ChEBI" id="CHEBI:62192"/>
    </reaction>
</comment>
<comment type="subunit">
    <text evidence="1">NDH is composed of at least 16 different subunits, 5 of which are encoded in the nucleus.</text>
</comment>
<comment type="subcellular location">
    <subcellularLocation>
        <location evidence="1">Plastid</location>
        <location evidence="1">Chloroplast thylakoid membrane</location>
        <topology evidence="1">Peripheral membrane protein</topology>
        <orientation evidence="1">Stromal side</orientation>
    </subcellularLocation>
</comment>
<comment type="similarity">
    <text evidence="1">Belongs to the complex I 30 kDa subunit family.</text>
</comment>
<sequence>MQGRLSAWLVKHGLVHRSLGFDYQGIETLQIKPEDWHSIAVILYVYGYNYLRSQCAYDVAPGGLLASVYHLTRIEYGVDQPEEVCIKVFAPRRNPRIPSVFWVWKSADFQERESYDMFGISYDNHPRLKRILMPESWIGWPLRKDYIVPNFYEIQDAY</sequence>
<protein>
    <recommendedName>
        <fullName evidence="1">NAD(P)H-quinone oxidoreductase subunit J, chloroplastic</fullName>
        <ecNumber evidence="1">7.1.1.-</ecNumber>
    </recommendedName>
    <alternativeName>
        <fullName>NAD(P)H dehydrogenase subunit J</fullName>
    </alternativeName>
    <alternativeName>
        <fullName evidence="1">NADH-plastoquinone oxidoreductase subunit J</fullName>
    </alternativeName>
</protein>
<name>NDHJ_SPIOL</name>
<geneLocation type="chloroplast"/>
<keyword id="KW-0002">3D-structure</keyword>
<keyword id="KW-0150">Chloroplast</keyword>
<keyword id="KW-0472">Membrane</keyword>
<keyword id="KW-0520">NAD</keyword>
<keyword id="KW-0521">NADP</keyword>
<keyword id="KW-0934">Plastid</keyword>
<keyword id="KW-0618">Plastoquinone</keyword>
<keyword id="KW-0874">Quinone</keyword>
<keyword id="KW-1185">Reference proteome</keyword>
<keyword id="KW-0793">Thylakoid</keyword>
<keyword id="KW-1278">Translocase</keyword>
<keyword id="KW-0813">Transport</keyword>
<feature type="chain" id="PRO_0000118662" description="NAD(P)H-quinone oxidoreductase subunit J, chloroplastic">
    <location>
        <begin position="1"/>
        <end position="158"/>
    </location>
</feature>
<reference key="1">
    <citation type="journal article" date="2001" name="Plant Mol. Biol.">
        <title>The plastid chromosome of spinach (Spinacia oleracea): complete nucleotide sequence and gene organization.</title>
        <authorList>
            <person name="Schmitz-Linneweber C."/>
            <person name="Maier R.M."/>
            <person name="Alcaraz J.-P."/>
            <person name="Cottet A."/>
            <person name="Herrmann R.G."/>
            <person name="Mache R."/>
        </authorList>
    </citation>
    <scope>NUCLEOTIDE SEQUENCE [LARGE SCALE GENOMIC DNA]</scope>
    <source>
        <strain>cv. Geant d'hiver</strain>
        <strain>cv. Monatol</strain>
    </source>
</reference>
<organism>
    <name type="scientific">Spinacia oleracea</name>
    <name type="common">Spinach</name>
    <dbReference type="NCBI Taxonomy" id="3562"/>
    <lineage>
        <taxon>Eukaryota</taxon>
        <taxon>Viridiplantae</taxon>
        <taxon>Streptophyta</taxon>
        <taxon>Embryophyta</taxon>
        <taxon>Tracheophyta</taxon>
        <taxon>Spermatophyta</taxon>
        <taxon>Magnoliopsida</taxon>
        <taxon>eudicotyledons</taxon>
        <taxon>Gunneridae</taxon>
        <taxon>Pentapetalae</taxon>
        <taxon>Caryophyllales</taxon>
        <taxon>Chenopodiaceae</taxon>
        <taxon>Chenopodioideae</taxon>
        <taxon>Anserineae</taxon>
        <taxon>Spinacia</taxon>
    </lineage>
</organism>
<proteinExistence type="evidence at protein level"/>
<gene>
    <name evidence="1" type="primary">ndhJ</name>
</gene>
<evidence type="ECO:0000255" key="1">
    <source>
        <dbReference type="HAMAP-Rule" id="MF_01357"/>
    </source>
</evidence>
<dbReference type="EC" id="7.1.1.-" evidence="1"/>
<dbReference type="EMBL" id="AJ400848">
    <property type="protein sequence ID" value="CAB88732.1"/>
    <property type="molecule type" value="Genomic_DNA"/>
</dbReference>
<dbReference type="RefSeq" id="NP_054939.1">
    <property type="nucleotide sequence ID" value="NC_002202.1"/>
</dbReference>
<dbReference type="PDB" id="9GRX">
    <property type="method" value="EM"/>
    <property type="resolution" value="3.19 A"/>
    <property type="chains" value="J=1-158"/>
</dbReference>
<dbReference type="PDBsum" id="9GRX"/>
<dbReference type="EMDB" id="EMD-51527"/>
<dbReference type="SMR" id="Q9M3M1"/>
<dbReference type="FunCoup" id="Q9M3M1">
    <property type="interactions" value="34"/>
</dbReference>
<dbReference type="STRING" id="3562.Q9M3M1"/>
<dbReference type="GeneID" id="2715595"/>
<dbReference type="KEGG" id="soe:2715595"/>
<dbReference type="InParanoid" id="Q9M3M1"/>
<dbReference type="OrthoDB" id="1909959at2759"/>
<dbReference type="Proteomes" id="UP001155700">
    <property type="component" value="Chloroplast Pltd"/>
</dbReference>
<dbReference type="GO" id="GO:0009535">
    <property type="term" value="C:chloroplast thylakoid membrane"/>
    <property type="evidence" value="ECO:0007669"/>
    <property type="project" value="UniProtKB-SubCell"/>
</dbReference>
<dbReference type="GO" id="GO:0008137">
    <property type="term" value="F:NADH dehydrogenase (ubiquinone) activity"/>
    <property type="evidence" value="ECO:0007669"/>
    <property type="project" value="InterPro"/>
</dbReference>
<dbReference type="GO" id="GO:0048038">
    <property type="term" value="F:quinone binding"/>
    <property type="evidence" value="ECO:0007669"/>
    <property type="project" value="UniProtKB-KW"/>
</dbReference>
<dbReference type="GO" id="GO:0019684">
    <property type="term" value="P:photosynthesis, light reaction"/>
    <property type="evidence" value="ECO:0007669"/>
    <property type="project" value="UniProtKB-UniRule"/>
</dbReference>
<dbReference type="FunFam" id="3.30.460.80:FF:000004">
    <property type="entry name" value="NAD(P)H-quinone oxidoreductase subunit J, chloroplastic"/>
    <property type="match status" value="1"/>
</dbReference>
<dbReference type="Gene3D" id="3.30.460.80">
    <property type="entry name" value="NADH:ubiquinone oxidoreductase, 30kDa subunit"/>
    <property type="match status" value="1"/>
</dbReference>
<dbReference type="HAMAP" id="MF_01357">
    <property type="entry name" value="NDH1_NuoC"/>
    <property type="match status" value="1"/>
</dbReference>
<dbReference type="InterPro" id="IPR010218">
    <property type="entry name" value="NADH_DH_suC"/>
</dbReference>
<dbReference type="InterPro" id="IPR037232">
    <property type="entry name" value="NADH_quin_OxRdtase_su_C/D-like"/>
</dbReference>
<dbReference type="InterPro" id="IPR001268">
    <property type="entry name" value="NADH_UbQ_OxRdtase_30kDa_su"/>
</dbReference>
<dbReference type="InterPro" id="IPR020396">
    <property type="entry name" value="NADH_UbQ_OxRdtase_CS"/>
</dbReference>
<dbReference type="NCBIfam" id="NF009141">
    <property type="entry name" value="PRK12494.1"/>
    <property type="match status" value="1"/>
</dbReference>
<dbReference type="PANTHER" id="PTHR10884:SF14">
    <property type="entry name" value="NADH DEHYDROGENASE [UBIQUINONE] IRON-SULFUR PROTEIN 3, MITOCHONDRIAL"/>
    <property type="match status" value="1"/>
</dbReference>
<dbReference type="PANTHER" id="PTHR10884">
    <property type="entry name" value="NADH DEHYDROGENASE UBIQUINONE IRON-SULFUR PROTEIN 3"/>
    <property type="match status" value="1"/>
</dbReference>
<dbReference type="Pfam" id="PF00329">
    <property type="entry name" value="Complex1_30kDa"/>
    <property type="match status" value="1"/>
</dbReference>
<dbReference type="SUPFAM" id="SSF143243">
    <property type="entry name" value="Nqo5-like"/>
    <property type="match status" value="1"/>
</dbReference>
<dbReference type="PROSITE" id="PS00542">
    <property type="entry name" value="COMPLEX1_30K"/>
    <property type="match status" value="1"/>
</dbReference>
<accession>Q9M3M1</accession>